<organism>
    <name type="scientific">Salmonella agona (strain SL483)</name>
    <dbReference type="NCBI Taxonomy" id="454166"/>
    <lineage>
        <taxon>Bacteria</taxon>
        <taxon>Pseudomonadati</taxon>
        <taxon>Pseudomonadota</taxon>
        <taxon>Gammaproteobacteria</taxon>
        <taxon>Enterobacterales</taxon>
        <taxon>Enterobacteriaceae</taxon>
        <taxon>Salmonella</taxon>
    </lineage>
</organism>
<accession>B5F6T8</accession>
<feature type="chain" id="PRO_1000093817" description="Translation initiation factor IF-2">
    <location>
        <begin position="1"/>
        <end position="892"/>
    </location>
</feature>
<feature type="domain" description="tr-type G">
    <location>
        <begin position="391"/>
        <end position="560"/>
    </location>
</feature>
<feature type="region of interest" description="Disordered" evidence="3">
    <location>
        <begin position="88"/>
        <end position="305"/>
    </location>
</feature>
<feature type="region of interest" description="G1" evidence="1">
    <location>
        <begin position="400"/>
        <end position="407"/>
    </location>
</feature>
<feature type="region of interest" description="G2" evidence="1">
    <location>
        <begin position="425"/>
        <end position="429"/>
    </location>
</feature>
<feature type="region of interest" description="G3" evidence="1">
    <location>
        <begin position="446"/>
        <end position="449"/>
    </location>
</feature>
<feature type="region of interest" description="G4" evidence="1">
    <location>
        <begin position="500"/>
        <end position="503"/>
    </location>
</feature>
<feature type="region of interest" description="G5" evidence="1">
    <location>
        <begin position="536"/>
        <end position="538"/>
    </location>
</feature>
<feature type="compositionally biased region" description="Basic and acidic residues" evidence="3">
    <location>
        <begin position="93"/>
        <end position="159"/>
    </location>
</feature>
<feature type="compositionally biased region" description="Basic and acidic residues" evidence="3">
    <location>
        <begin position="166"/>
        <end position="216"/>
    </location>
</feature>
<feature type="compositionally biased region" description="Basic residues" evidence="3">
    <location>
        <begin position="254"/>
        <end position="269"/>
    </location>
</feature>
<feature type="compositionally biased region" description="Basic and acidic residues" evidence="3">
    <location>
        <begin position="270"/>
        <end position="282"/>
    </location>
</feature>
<feature type="binding site" evidence="2">
    <location>
        <begin position="400"/>
        <end position="407"/>
    </location>
    <ligand>
        <name>GTP</name>
        <dbReference type="ChEBI" id="CHEBI:37565"/>
    </ligand>
</feature>
<feature type="binding site" evidence="2">
    <location>
        <begin position="446"/>
        <end position="450"/>
    </location>
    <ligand>
        <name>GTP</name>
        <dbReference type="ChEBI" id="CHEBI:37565"/>
    </ligand>
</feature>
<feature type="binding site" evidence="2">
    <location>
        <begin position="500"/>
        <end position="503"/>
    </location>
    <ligand>
        <name>GTP</name>
        <dbReference type="ChEBI" id="CHEBI:37565"/>
    </ligand>
</feature>
<reference key="1">
    <citation type="journal article" date="2011" name="J. Bacteriol.">
        <title>Comparative genomics of 28 Salmonella enterica isolates: evidence for CRISPR-mediated adaptive sublineage evolution.</title>
        <authorList>
            <person name="Fricke W.F."/>
            <person name="Mammel M.K."/>
            <person name="McDermott P.F."/>
            <person name="Tartera C."/>
            <person name="White D.G."/>
            <person name="Leclerc J.E."/>
            <person name="Ravel J."/>
            <person name="Cebula T.A."/>
        </authorList>
    </citation>
    <scope>NUCLEOTIDE SEQUENCE [LARGE SCALE GENOMIC DNA]</scope>
    <source>
        <strain>SL483</strain>
    </source>
</reference>
<comment type="function">
    <text evidence="2">One of the essential components for the initiation of protein synthesis. Protects formylmethionyl-tRNA from spontaneous hydrolysis and promotes its binding to the 30S ribosomal subunits. Also involved in the hydrolysis of GTP during the formation of the 70S ribosomal complex.</text>
</comment>
<comment type="subcellular location">
    <subcellularLocation>
        <location evidence="2">Cytoplasm</location>
    </subcellularLocation>
</comment>
<comment type="similarity">
    <text evidence="2">Belongs to the TRAFAC class translation factor GTPase superfamily. Classic translation factor GTPase family. IF-2 subfamily.</text>
</comment>
<keyword id="KW-0963">Cytoplasm</keyword>
<keyword id="KW-0342">GTP-binding</keyword>
<keyword id="KW-0396">Initiation factor</keyword>
<keyword id="KW-0547">Nucleotide-binding</keyword>
<keyword id="KW-0648">Protein biosynthesis</keyword>
<proteinExistence type="inferred from homology"/>
<dbReference type="EMBL" id="CP001138">
    <property type="protein sequence ID" value="ACH50429.1"/>
    <property type="molecule type" value="Genomic_DNA"/>
</dbReference>
<dbReference type="RefSeq" id="WP_000133064.1">
    <property type="nucleotide sequence ID" value="NC_011149.1"/>
</dbReference>
<dbReference type="SMR" id="B5F6T8"/>
<dbReference type="KEGG" id="sea:SeAg_B3475"/>
<dbReference type="HOGENOM" id="CLU_006301_6_3_6"/>
<dbReference type="Proteomes" id="UP000008819">
    <property type="component" value="Chromosome"/>
</dbReference>
<dbReference type="GO" id="GO:0005829">
    <property type="term" value="C:cytosol"/>
    <property type="evidence" value="ECO:0007669"/>
    <property type="project" value="TreeGrafter"/>
</dbReference>
<dbReference type="GO" id="GO:0005525">
    <property type="term" value="F:GTP binding"/>
    <property type="evidence" value="ECO:0007669"/>
    <property type="project" value="UniProtKB-KW"/>
</dbReference>
<dbReference type="GO" id="GO:0003924">
    <property type="term" value="F:GTPase activity"/>
    <property type="evidence" value="ECO:0007669"/>
    <property type="project" value="UniProtKB-UniRule"/>
</dbReference>
<dbReference type="GO" id="GO:0097216">
    <property type="term" value="F:guanosine tetraphosphate binding"/>
    <property type="evidence" value="ECO:0007669"/>
    <property type="project" value="UniProtKB-ARBA"/>
</dbReference>
<dbReference type="GO" id="GO:0003743">
    <property type="term" value="F:translation initiation factor activity"/>
    <property type="evidence" value="ECO:0007669"/>
    <property type="project" value="UniProtKB-UniRule"/>
</dbReference>
<dbReference type="CDD" id="cd01887">
    <property type="entry name" value="IF2_eIF5B"/>
    <property type="match status" value="1"/>
</dbReference>
<dbReference type="CDD" id="cd03702">
    <property type="entry name" value="IF2_mtIF2_II"/>
    <property type="match status" value="1"/>
</dbReference>
<dbReference type="CDD" id="cd03692">
    <property type="entry name" value="mtIF2_IVc"/>
    <property type="match status" value="1"/>
</dbReference>
<dbReference type="FunFam" id="2.40.30.10:FF:000007">
    <property type="entry name" value="Translation initiation factor IF-2"/>
    <property type="match status" value="1"/>
</dbReference>
<dbReference type="FunFam" id="2.40.30.10:FF:000008">
    <property type="entry name" value="Translation initiation factor IF-2"/>
    <property type="match status" value="1"/>
</dbReference>
<dbReference type="FunFam" id="3.30.56.50:FF:000001">
    <property type="entry name" value="Translation initiation factor IF-2"/>
    <property type="match status" value="1"/>
</dbReference>
<dbReference type="FunFam" id="3.40.50.10050:FF:000001">
    <property type="entry name" value="Translation initiation factor IF-2"/>
    <property type="match status" value="1"/>
</dbReference>
<dbReference type="FunFam" id="3.40.50.300:FF:000019">
    <property type="entry name" value="Translation initiation factor IF-2"/>
    <property type="match status" value="1"/>
</dbReference>
<dbReference type="Gene3D" id="3.40.50.300">
    <property type="entry name" value="P-loop containing nucleotide triphosphate hydrolases"/>
    <property type="match status" value="1"/>
</dbReference>
<dbReference type="Gene3D" id="3.30.56.50">
    <property type="entry name" value="Putative DNA-binding domain, N-terminal subdomain of bacterial translation initiation factor IF2"/>
    <property type="match status" value="1"/>
</dbReference>
<dbReference type="Gene3D" id="2.40.30.10">
    <property type="entry name" value="Translation factors"/>
    <property type="match status" value="2"/>
</dbReference>
<dbReference type="Gene3D" id="3.40.50.10050">
    <property type="entry name" value="Translation initiation factor IF- 2, domain 3"/>
    <property type="match status" value="1"/>
</dbReference>
<dbReference type="HAMAP" id="MF_00100_B">
    <property type="entry name" value="IF_2_B"/>
    <property type="match status" value="1"/>
</dbReference>
<dbReference type="InterPro" id="IPR009061">
    <property type="entry name" value="DNA-bd_dom_put_sf"/>
</dbReference>
<dbReference type="InterPro" id="IPR053905">
    <property type="entry name" value="EF-G-like_DII"/>
</dbReference>
<dbReference type="InterPro" id="IPR004161">
    <property type="entry name" value="EFTu-like_2"/>
</dbReference>
<dbReference type="InterPro" id="IPR013575">
    <property type="entry name" value="IF2_assoc_dom_bac"/>
</dbReference>
<dbReference type="InterPro" id="IPR044145">
    <property type="entry name" value="IF2_II"/>
</dbReference>
<dbReference type="InterPro" id="IPR006847">
    <property type="entry name" value="IF2_N"/>
</dbReference>
<dbReference type="InterPro" id="IPR027417">
    <property type="entry name" value="P-loop_NTPase"/>
</dbReference>
<dbReference type="InterPro" id="IPR005225">
    <property type="entry name" value="Small_GTP-bd"/>
</dbReference>
<dbReference type="InterPro" id="IPR000795">
    <property type="entry name" value="T_Tr_GTP-bd_dom"/>
</dbReference>
<dbReference type="InterPro" id="IPR000178">
    <property type="entry name" value="TF_IF2_bacterial-like"/>
</dbReference>
<dbReference type="InterPro" id="IPR015760">
    <property type="entry name" value="TIF_IF2"/>
</dbReference>
<dbReference type="InterPro" id="IPR023115">
    <property type="entry name" value="TIF_IF2_dom3"/>
</dbReference>
<dbReference type="InterPro" id="IPR036925">
    <property type="entry name" value="TIF_IF2_dom3_sf"/>
</dbReference>
<dbReference type="InterPro" id="IPR009000">
    <property type="entry name" value="Transl_B-barrel_sf"/>
</dbReference>
<dbReference type="NCBIfam" id="TIGR00487">
    <property type="entry name" value="IF-2"/>
    <property type="match status" value="1"/>
</dbReference>
<dbReference type="NCBIfam" id="TIGR00231">
    <property type="entry name" value="small_GTP"/>
    <property type="match status" value="1"/>
</dbReference>
<dbReference type="PANTHER" id="PTHR43381:SF5">
    <property type="entry name" value="TR-TYPE G DOMAIN-CONTAINING PROTEIN"/>
    <property type="match status" value="1"/>
</dbReference>
<dbReference type="PANTHER" id="PTHR43381">
    <property type="entry name" value="TRANSLATION INITIATION FACTOR IF-2-RELATED"/>
    <property type="match status" value="1"/>
</dbReference>
<dbReference type="Pfam" id="PF22042">
    <property type="entry name" value="EF-G_D2"/>
    <property type="match status" value="1"/>
</dbReference>
<dbReference type="Pfam" id="PF00009">
    <property type="entry name" value="GTP_EFTU"/>
    <property type="match status" value="1"/>
</dbReference>
<dbReference type="Pfam" id="PF03144">
    <property type="entry name" value="GTP_EFTU_D2"/>
    <property type="match status" value="1"/>
</dbReference>
<dbReference type="Pfam" id="PF11987">
    <property type="entry name" value="IF-2"/>
    <property type="match status" value="1"/>
</dbReference>
<dbReference type="Pfam" id="PF08364">
    <property type="entry name" value="IF2_assoc"/>
    <property type="match status" value="1"/>
</dbReference>
<dbReference type="Pfam" id="PF04760">
    <property type="entry name" value="IF2_N"/>
    <property type="match status" value="2"/>
</dbReference>
<dbReference type="SUPFAM" id="SSF52156">
    <property type="entry name" value="Initiation factor IF2/eIF5b, domain 3"/>
    <property type="match status" value="1"/>
</dbReference>
<dbReference type="SUPFAM" id="SSF52540">
    <property type="entry name" value="P-loop containing nucleoside triphosphate hydrolases"/>
    <property type="match status" value="1"/>
</dbReference>
<dbReference type="SUPFAM" id="SSF46955">
    <property type="entry name" value="Putative DNA-binding domain"/>
    <property type="match status" value="1"/>
</dbReference>
<dbReference type="SUPFAM" id="SSF50447">
    <property type="entry name" value="Translation proteins"/>
    <property type="match status" value="2"/>
</dbReference>
<dbReference type="PROSITE" id="PS51722">
    <property type="entry name" value="G_TR_2"/>
    <property type="match status" value="1"/>
</dbReference>
<dbReference type="PROSITE" id="PS01176">
    <property type="entry name" value="IF2"/>
    <property type="match status" value="1"/>
</dbReference>
<protein>
    <recommendedName>
        <fullName evidence="2">Translation initiation factor IF-2</fullName>
    </recommendedName>
</protein>
<sequence length="892" mass="97402">MTDVTLKALAAERQVSVDRLVQQFADAGIRKSADDSVSAQEKQTLLAHLNREAVSGPDKLTLQRKTRSTLNIPGTGGKSKSVQIEVRKKRTFVKRDPQEAERLAAEEQAQREAEEQARREAEEQAKREAQQKAEREAAEQAKREAAEKAKREAAEKDKVSNQQTDDMTKTAQAEKARRENEAAELKRKAEEEARRKLEEEARRVAEEARRMAEENKWTATPEPVEDTSDYHVTTSQHARQAEDENDREVEGGRGRGRNAKAARPAKKGKHAESKADREEARAAVRGGKGGKRKGSSLQQGFQKPAQAVNRDVVIGETITVGELANKMAVKGSQVIKAMMKLGAMATINQVIDQETAQLVAEEMGHKVILRRENELEEAVMSDRDTGAAAEPRAPVVTIMGHVDHGKTSLLDYIRSTKVASGEAGGITQHIGAYHVETDNGMITFLDTPGHAAFTSMRARGAQATDIVVLVVAADDGVMPQTIEAIQHAKAAGVPVVVAVNKIDKPEADPDRVKNELSQYGILPEEWGGESQFVHVSAKAGTGIDELLDAILLQAEVLELKAVRKGMASGAVIESFLDKGRGPVATVLVREGTLHKGDIVLCGFEYGRVRAMRNELGQEVLEAGPSIPVEILGLSGVPAAGDEVTVVRDEKKAREVALYRQGKFREVKLARQQKSKLENMFANMTEGEVHEVNIVLKADVQGSVEAISDSLLKLSTDEVKVKIIGSGVGGITETDATLAAASNAILVGFNVRADASARKVIESESLDLRYYSVIYNLIDEVKAAMSGMLSPELKQQIIGLAEVRDVFKSPKFGAIAGCMVTEGTIKRHNPIRVLRDNVVIYEGELESLRRFKDDVNEVRNGMECGIGVKNYNDVRVGDMIEVFEIIEIQRTIA</sequence>
<evidence type="ECO:0000250" key="1"/>
<evidence type="ECO:0000255" key="2">
    <source>
        <dbReference type="HAMAP-Rule" id="MF_00100"/>
    </source>
</evidence>
<evidence type="ECO:0000256" key="3">
    <source>
        <dbReference type="SAM" id="MobiDB-lite"/>
    </source>
</evidence>
<gene>
    <name evidence="2" type="primary">infB</name>
    <name type="ordered locus">SeAg_B3475</name>
</gene>
<name>IF2_SALA4</name>